<comment type="function">
    <text evidence="1 2">Catalyzes the transfer of the 2-phospholactate moiety from (2S)-lactyl-2-diphospho-5'-guanosine to 7,8-didemethyl-8-hydroxy-5-deazariboflavin (FO) with the formation of oxidized coenzyme F420-0 and GMP.</text>
</comment>
<comment type="catalytic activity">
    <reaction evidence="1 2">
        <text>(2S)-lactyl-2-diphospho-5'-guanosine + 7,8-didemethyl-8-hydroxy-5-deazariboflavin = oxidized coenzyme F420-0 + GMP + H(+)</text>
        <dbReference type="Rhea" id="RHEA:63444"/>
        <dbReference type="ChEBI" id="CHEBI:15378"/>
        <dbReference type="ChEBI" id="CHEBI:58115"/>
        <dbReference type="ChEBI" id="CHEBI:59435"/>
        <dbReference type="ChEBI" id="CHEBI:59904"/>
        <dbReference type="ChEBI" id="CHEBI:59907"/>
        <dbReference type="EC" id="2.7.8.28"/>
    </reaction>
</comment>
<comment type="cofactor">
    <cofactor evidence="2">
        <name>Mg(2+)</name>
        <dbReference type="ChEBI" id="CHEBI:18420"/>
    </cofactor>
</comment>
<comment type="activity regulation">
    <text evidence="2">Inhibited by EDTA in vitro.</text>
</comment>
<comment type="biophysicochemical properties">
    <kinetics>
        <KM evidence="2">32 uM for FO</KM>
        <KM evidence="2">17 uM for LPPG</KM>
        <KM evidence="2">515 uM for LPPA</KM>
        <Vmax evidence="2">1.4 umol/min/mg enzyme with LPPG as substrate</Vmax>
        <Vmax evidence="2">0.1 umol/min/mg enzyme with LPPA as substrate</Vmax>
    </kinetics>
    <temperatureDependence>
        <text>Optimum temperature is about 37 degrees Celsius. Thermostable. Still fully active after heating at 80 degrees Celsius for 24 hours. Activity begins to decrease after heating at 98 degrees Celsius for 30 minutes. Inactive after heating at 110 degrees Celsius for 30 minutes.</text>
    </temperatureDependence>
</comment>
<comment type="pathway">
    <text>Cofactor biosynthesis; coenzyme F420 biosynthesis.</text>
</comment>
<comment type="subunit">
    <text evidence="2">Homodimer.</text>
</comment>
<comment type="similarity">
    <text evidence="4">Belongs to the CofD family.</text>
</comment>
<feature type="chain" id="PRO_0000145772" description="2-phospho-L-lactate transferase">
    <location>
        <begin position="1"/>
        <end position="311"/>
    </location>
</feature>
<feature type="binding site" evidence="1">
    <location>
        <position position="52"/>
    </location>
    <ligand>
        <name>7,8-didemethyl-8-hydroxy-5-deazariboflavin</name>
        <dbReference type="ChEBI" id="CHEBI:59904"/>
    </ligand>
</feature>
<feature type="binding site" evidence="1">
    <location>
        <position position="91"/>
    </location>
    <ligand>
        <name>7,8-didemethyl-8-hydroxy-5-deazariboflavin</name>
        <dbReference type="ChEBI" id="CHEBI:59904"/>
    </ligand>
</feature>
<feature type="mutagenesis site" description="No change in activity." evidence="2">
    <original>S</original>
    <variation>A</variation>
    <location>
        <position position="211"/>
    </location>
</feature>
<gene>
    <name evidence="3" type="primary">cofD</name>
    <name type="ordered locus">MJ1256</name>
</gene>
<accession>Q58653</accession>
<reference key="1">
    <citation type="journal article" date="1996" name="Science">
        <title>Complete genome sequence of the methanogenic archaeon, Methanococcus jannaschii.</title>
        <authorList>
            <person name="Bult C.J."/>
            <person name="White O."/>
            <person name="Olsen G.J."/>
            <person name="Zhou L."/>
            <person name="Fleischmann R.D."/>
            <person name="Sutton G.G."/>
            <person name="Blake J.A."/>
            <person name="FitzGerald L.M."/>
            <person name="Clayton R.A."/>
            <person name="Gocayne J.D."/>
            <person name="Kerlavage A.R."/>
            <person name="Dougherty B.A."/>
            <person name="Tomb J.-F."/>
            <person name="Adams M.D."/>
            <person name="Reich C.I."/>
            <person name="Overbeek R."/>
            <person name="Kirkness E.F."/>
            <person name="Weinstock K.G."/>
            <person name="Merrick J.M."/>
            <person name="Glodek A."/>
            <person name="Scott J.L."/>
            <person name="Geoghagen N.S.M."/>
            <person name="Weidman J.F."/>
            <person name="Fuhrmann J.L."/>
            <person name="Nguyen D."/>
            <person name="Utterback T.R."/>
            <person name="Kelley J.M."/>
            <person name="Peterson J.D."/>
            <person name="Sadow P.W."/>
            <person name="Hanna M.C."/>
            <person name="Cotton M.D."/>
            <person name="Roberts K.M."/>
            <person name="Hurst M.A."/>
            <person name="Kaine B.P."/>
            <person name="Borodovsky M."/>
            <person name="Klenk H.-P."/>
            <person name="Fraser C.M."/>
            <person name="Smith H.O."/>
            <person name="Woese C.R."/>
            <person name="Venter J.C."/>
        </authorList>
    </citation>
    <scope>NUCLEOTIDE SEQUENCE [LARGE SCALE GENOMIC DNA]</scope>
    <source>
        <strain>ATCC 43067 / DSM 2661 / JAL-1 / JCM 10045 / NBRC 100440</strain>
    </source>
</reference>
<reference key="2">
    <citation type="journal article" date="2002" name="Biochemistry">
        <title>Characterization of the 2-phospho-L-lactate transferase enzyme involved in coenzyme F(420) biosynthesis in Methanococcus jannaschii.</title>
        <authorList>
            <person name="Graupner M."/>
            <person name="Xu H."/>
            <person name="White R.H."/>
        </authorList>
    </citation>
    <scope>FUNCTION</scope>
    <scope>CATALYTIC ACTIVITY</scope>
    <scope>COFACTOR</scope>
    <scope>BIOPHYSICOCHEMICAL PROPERTIES</scope>
    <scope>SUBUNIT</scope>
    <scope>MUTAGENESIS OF SER-211</scope>
    <source>
        <strain>ATCC 43067 / DSM 2661 / JAL-1 / JCM 10045 / NBRC 100440</strain>
    </source>
</reference>
<evidence type="ECO:0000255" key="1">
    <source>
        <dbReference type="HAMAP-Rule" id="MF_01257"/>
    </source>
</evidence>
<evidence type="ECO:0000269" key="2">
    <source>
    </source>
</evidence>
<evidence type="ECO:0000303" key="3">
    <source>
    </source>
</evidence>
<evidence type="ECO:0000305" key="4"/>
<protein>
    <recommendedName>
        <fullName evidence="1 3">2-phospho-L-lactate transferase</fullName>
        <ecNumber evidence="1">2.7.8.28</ecNumber>
    </recommendedName>
    <alternativeName>
        <fullName evidence="3">LPPG:FO 2-phospho-L-lactate transferase</fullName>
    </alternativeName>
</protein>
<keyword id="KW-0460">Magnesium</keyword>
<keyword id="KW-1185">Reference proteome</keyword>
<keyword id="KW-0808">Transferase</keyword>
<organism>
    <name type="scientific">Methanocaldococcus jannaschii (strain ATCC 43067 / DSM 2661 / JAL-1 / JCM 10045 / NBRC 100440)</name>
    <name type="common">Methanococcus jannaschii</name>
    <dbReference type="NCBI Taxonomy" id="243232"/>
    <lineage>
        <taxon>Archaea</taxon>
        <taxon>Methanobacteriati</taxon>
        <taxon>Methanobacteriota</taxon>
        <taxon>Methanomada group</taxon>
        <taxon>Methanococci</taxon>
        <taxon>Methanococcales</taxon>
        <taxon>Methanocaldococcaceae</taxon>
        <taxon>Methanocaldococcus</taxon>
    </lineage>
</organism>
<sequence length="311" mass="34599">MIFVITVLSGGTGTPKLLQGLKRVVNNEELAVIVNTGEDTWIGDLYLSPDVDTVLYTLADLINEETWYGVKEDTFYTHEQLKNLGFDEVLRIGDKDRALKMHKTYYLKRGHKLSEVVDMEKVALGIKAKVIPMTDDRVETKILAKVDGKVDLLKFHDFWVKRKGDVEVLDVIYENSLYAKPCEKAVEAIKNSDLVIIGPSNPITSIGPILSLNGIKELLKDKKVVVVSPIVGNSAVSGPAGKLMKAKGYDVSVKGIYEFYKDIVDVLVIDNVDKEIAKEIPCEVLITNTIMKTLDDKVRLAKNIIEFCGSL</sequence>
<name>COFD_METJA</name>
<dbReference type="EC" id="2.7.8.28" evidence="1"/>
<dbReference type="EMBL" id="L77117">
    <property type="protein sequence ID" value="AAB99260.1"/>
    <property type="molecule type" value="Genomic_DNA"/>
</dbReference>
<dbReference type="PIR" id="G64456">
    <property type="entry name" value="G64456"/>
</dbReference>
<dbReference type="SMR" id="Q58653"/>
<dbReference type="FunCoup" id="Q58653">
    <property type="interactions" value="110"/>
</dbReference>
<dbReference type="STRING" id="243232.MJ_1256"/>
<dbReference type="PaxDb" id="243232-MJ_1256"/>
<dbReference type="EnsemblBacteria" id="AAB99260">
    <property type="protein sequence ID" value="AAB99260"/>
    <property type="gene ID" value="MJ_1256"/>
</dbReference>
<dbReference type="KEGG" id="mja:MJ_1256"/>
<dbReference type="eggNOG" id="arCOG04395">
    <property type="taxonomic scope" value="Archaea"/>
</dbReference>
<dbReference type="HOGENOM" id="CLU_055795_1_0_2"/>
<dbReference type="InParanoid" id="Q58653"/>
<dbReference type="OrthoDB" id="59563at2157"/>
<dbReference type="PhylomeDB" id="Q58653"/>
<dbReference type="BioCyc" id="MetaCyc:MONOMER-12181"/>
<dbReference type="BRENDA" id="2.7.8.28">
    <property type="organism ID" value="3260"/>
</dbReference>
<dbReference type="SABIO-RK" id="Q58653"/>
<dbReference type="UniPathway" id="UPA00071"/>
<dbReference type="Proteomes" id="UP000000805">
    <property type="component" value="Chromosome"/>
</dbReference>
<dbReference type="GO" id="GO:0043743">
    <property type="term" value="F:LPPG:FO 2-phospho-L-lactate transferase activity"/>
    <property type="evidence" value="ECO:0000314"/>
    <property type="project" value="MENGO"/>
</dbReference>
<dbReference type="GO" id="GO:0000287">
    <property type="term" value="F:magnesium ion binding"/>
    <property type="evidence" value="ECO:0007669"/>
    <property type="project" value="InterPro"/>
</dbReference>
<dbReference type="GO" id="GO:0052645">
    <property type="term" value="P:F420-0 metabolic process"/>
    <property type="evidence" value="ECO:0007669"/>
    <property type="project" value="UniProtKB-UniRule"/>
</dbReference>
<dbReference type="CDD" id="cd07186">
    <property type="entry name" value="CofD_like"/>
    <property type="match status" value="1"/>
</dbReference>
<dbReference type="Gene3D" id="1.10.8.240">
    <property type="entry name" value="CofD-like domain"/>
    <property type="match status" value="1"/>
</dbReference>
<dbReference type="Gene3D" id="3.40.50.10680">
    <property type="entry name" value="CofD-like domains"/>
    <property type="match status" value="1"/>
</dbReference>
<dbReference type="HAMAP" id="MF_01257">
    <property type="entry name" value="CofD"/>
    <property type="match status" value="1"/>
</dbReference>
<dbReference type="InterPro" id="IPR002882">
    <property type="entry name" value="CofD"/>
</dbReference>
<dbReference type="InterPro" id="IPR038136">
    <property type="entry name" value="CofD-like_dom_sf"/>
</dbReference>
<dbReference type="InterPro" id="IPR010115">
    <property type="entry name" value="FbiA/CofD"/>
</dbReference>
<dbReference type="NCBIfam" id="TIGR01819">
    <property type="entry name" value="F420_cofD"/>
    <property type="match status" value="1"/>
</dbReference>
<dbReference type="PANTHER" id="PTHR43007">
    <property type="entry name" value="2-PHOSPHO-L-LACTATE TRANSFERASE"/>
    <property type="match status" value="1"/>
</dbReference>
<dbReference type="PANTHER" id="PTHR43007:SF1">
    <property type="entry name" value="2-PHOSPHO-L-LACTATE TRANSFERASE"/>
    <property type="match status" value="1"/>
</dbReference>
<dbReference type="Pfam" id="PF01933">
    <property type="entry name" value="CofD"/>
    <property type="match status" value="1"/>
</dbReference>
<dbReference type="SUPFAM" id="SSF142338">
    <property type="entry name" value="CofD-like"/>
    <property type="match status" value="1"/>
</dbReference>
<proteinExistence type="evidence at protein level"/>